<gene>
    <name evidence="1" type="primary">rsxA</name>
    <name type="ordered locus">SPC_2272</name>
</gene>
<reference key="1">
    <citation type="journal article" date="2009" name="PLoS ONE">
        <title>Salmonella paratyphi C: genetic divergence from Salmonella choleraesuis and pathogenic convergence with Salmonella typhi.</title>
        <authorList>
            <person name="Liu W.-Q."/>
            <person name="Feng Y."/>
            <person name="Wang Y."/>
            <person name="Zou Q.-H."/>
            <person name="Chen F."/>
            <person name="Guo J.-T."/>
            <person name="Peng Y.-H."/>
            <person name="Jin Y."/>
            <person name="Li Y.-G."/>
            <person name="Hu S.-N."/>
            <person name="Johnston R.N."/>
            <person name="Liu G.-R."/>
            <person name="Liu S.-L."/>
        </authorList>
    </citation>
    <scope>NUCLEOTIDE SEQUENCE [LARGE SCALE GENOMIC DNA]</scope>
    <source>
        <strain>RKS4594</strain>
    </source>
</reference>
<accession>C0Q506</accession>
<organism>
    <name type="scientific">Salmonella paratyphi C (strain RKS4594)</name>
    <dbReference type="NCBI Taxonomy" id="476213"/>
    <lineage>
        <taxon>Bacteria</taxon>
        <taxon>Pseudomonadati</taxon>
        <taxon>Pseudomonadota</taxon>
        <taxon>Gammaproteobacteria</taxon>
        <taxon>Enterobacterales</taxon>
        <taxon>Enterobacteriaceae</taxon>
        <taxon>Salmonella</taxon>
    </lineage>
</organism>
<proteinExistence type="inferred from homology"/>
<dbReference type="EC" id="7.-.-.-" evidence="1"/>
<dbReference type="EMBL" id="CP000857">
    <property type="protein sequence ID" value="ACN46389.1"/>
    <property type="molecule type" value="Genomic_DNA"/>
</dbReference>
<dbReference type="RefSeq" id="WP_000133179.1">
    <property type="nucleotide sequence ID" value="NC_012125.1"/>
</dbReference>
<dbReference type="SMR" id="C0Q506"/>
<dbReference type="GeneID" id="66755900"/>
<dbReference type="KEGG" id="sei:SPC_2272"/>
<dbReference type="HOGENOM" id="CLU_095255_1_0_6"/>
<dbReference type="Proteomes" id="UP000001599">
    <property type="component" value="Chromosome"/>
</dbReference>
<dbReference type="GO" id="GO:0005886">
    <property type="term" value="C:plasma membrane"/>
    <property type="evidence" value="ECO:0007669"/>
    <property type="project" value="UniProtKB-SubCell"/>
</dbReference>
<dbReference type="GO" id="GO:0022900">
    <property type="term" value="P:electron transport chain"/>
    <property type="evidence" value="ECO:0007669"/>
    <property type="project" value="UniProtKB-UniRule"/>
</dbReference>
<dbReference type="HAMAP" id="MF_00459">
    <property type="entry name" value="RsxA_RnfA"/>
    <property type="match status" value="1"/>
</dbReference>
<dbReference type="InterPro" id="IPR011293">
    <property type="entry name" value="Ion_transpt_RnfA/RsxA"/>
</dbReference>
<dbReference type="InterPro" id="IPR003667">
    <property type="entry name" value="NqrDE/RnfAE"/>
</dbReference>
<dbReference type="InterPro" id="IPR050133">
    <property type="entry name" value="NqrDE/RnfAE_oxidrdctase"/>
</dbReference>
<dbReference type="NCBIfam" id="NF003481">
    <property type="entry name" value="PRK05151.1"/>
    <property type="match status" value="1"/>
</dbReference>
<dbReference type="NCBIfam" id="TIGR01943">
    <property type="entry name" value="rnfA"/>
    <property type="match status" value="1"/>
</dbReference>
<dbReference type="PANTHER" id="PTHR30335">
    <property type="entry name" value="INTEGRAL MEMBRANE PROTEIN OF SOXR-REDUCING COMPLEX"/>
    <property type="match status" value="1"/>
</dbReference>
<dbReference type="PANTHER" id="PTHR30335:SF0">
    <property type="entry name" value="ION-TRANSLOCATING OXIDOREDUCTASE COMPLEX SUBUNIT A"/>
    <property type="match status" value="1"/>
</dbReference>
<dbReference type="Pfam" id="PF02508">
    <property type="entry name" value="Rnf-Nqr"/>
    <property type="match status" value="1"/>
</dbReference>
<dbReference type="PIRSF" id="PIRSF006102">
    <property type="entry name" value="NQR_DE"/>
    <property type="match status" value="1"/>
</dbReference>
<feature type="chain" id="PRO_1000191738" description="Ion-translocating oxidoreductase complex subunit A">
    <location>
        <begin position="1"/>
        <end position="193"/>
    </location>
</feature>
<feature type="transmembrane region" description="Helical" evidence="1">
    <location>
        <begin position="5"/>
        <end position="25"/>
    </location>
</feature>
<feature type="transmembrane region" description="Helical" evidence="1">
    <location>
        <begin position="47"/>
        <end position="67"/>
    </location>
</feature>
<feature type="transmembrane region" description="Helical" evidence="1">
    <location>
        <begin position="72"/>
        <end position="92"/>
    </location>
</feature>
<feature type="transmembrane region" description="Helical" evidence="1">
    <location>
        <begin position="102"/>
        <end position="122"/>
    </location>
</feature>
<feature type="transmembrane region" description="Helical" evidence="1">
    <location>
        <begin position="134"/>
        <end position="154"/>
    </location>
</feature>
<feature type="transmembrane region" description="Helical" evidence="1">
    <location>
        <begin position="171"/>
        <end position="191"/>
    </location>
</feature>
<comment type="function">
    <text evidence="1">Part of a membrane-bound complex that couples electron transfer with translocation of ions across the membrane. Required to maintain the reduced state of SoxR.</text>
</comment>
<comment type="subunit">
    <text evidence="1">The complex is composed of six subunits: RsxA, RsxB, RsxC, RsxD, RsxE and RsxG.</text>
</comment>
<comment type="subcellular location">
    <subcellularLocation>
        <location evidence="1">Cell inner membrane</location>
        <topology evidence="1">Multi-pass membrane protein</topology>
    </subcellularLocation>
</comment>
<comment type="similarity">
    <text evidence="1">Belongs to the NqrDE/RnfAE family.</text>
</comment>
<keyword id="KW-0997">Cell inner membrane</keyword>
<keyword id="KW-1003">Cell membrane</keyword>
<keyword id="KW-0249">Electron transport</keyword>
<keyword id="KW-0472">Membrane</keyword>
<keyword id="KW-1278">Translocase</keyword>
<keyword id="KW-0812">Transmembrane</keyword>
<keyword id="KW-1133">Transmembrane helix</keyword>
<keyword id="KW-0813">Transport</keyword>
<evidence type="ECO:0000255" key="1">
    <source>
        <dbReference type="HAMAP-Rule" id="MF_00459"/>
    </source>
</evidence>
<protein>
    <recommendedName>
        <fullName evidence="1">Ion-translocating oxidoreductase complex subunit A</fullName>
        <ecNumber evidence="1">7.-.-.-</ecNumber>
    </recommendedName>
    <alternativeName>
        <fullName evidence="1">Rsx electron transport complex subunit A</fullName>
    </alternativeName>
</protein>
<sequence length="193" mass="20893">MTDYLLLFVGTVLVNNFVLVKFLGLCPFMGVSKKLETAMGMGLATTFVMTLASICAWLIDTWILIPLDLIYLRTLAFILVIAVVVQFTEMVVRKTSPALYRLLGIFLPLITTNCAVLGVALLNINLGHHFLQSALYGFSAAVGFSLVMVLFAAIRERLAVADVPAPFRGNAIALITAGLMSLAFMGFSGLVKL</sequence>
<name>RSXA_SALPC</name>